<protein>
    <recommendedName>
        <fullName evidence="1">Ribosomal RNA small subunit methyltransferase G</fullName>
        <ecNumber evidence="1">2.1.1.170</ecNumber>
    </recommendedName>
    <alternativeName>
        <fullName evidence="1">16S rRNA 7-methylguanosine methyltransferase</fullName>
        <shortName evidence="1">16S rRNA m7G methyltransferase</shortName>
    </alternativeName>
</protein>
<proteinExistence type="inferred from homology"/>
<comment type="function">
    <text evidence="1">Specifically methylates the N7 position of guanine in position 527 of 16S rRNA.</text>
</comment>
<comment type="catalytic activity">
    <reaction evidence="1">
        <text>guanosine(527) in 16S rRNA + S-adenosyl-L-methionine = N(7)-methylguanosine(527) in 16S rRNA + S-adenosyl-L-homocysteine</text>
        <dbReference type="Rhea" id="RHEA:42732"/>
        <dbReference type="Rhea" id="RHEA-COMP:10209"/>
        <dbReference type="Rhea" id="RHEA-COMP:10210"/>
        <dbReference type="ChEBI" id="CHEBI:57856"/>
        <dbReference type="ChEBI" id="CHEBI:59789"/>
        <dbReference type="ChEBI" id="CHEBI:74269"/>
        <dbReference type="ChEBI" id="CHEBI:74480"/>
        <dbReference type="EC" id="2.1.1.170"/>
    </reaction>
</comment>
<comment type="subcellular location">
    <subcellularLocation>
        <location evidence="1">Cytoplasm</location>
    </subcellularLocation>
</comment>
<comment type="similarity">
    <text evidence="1">Belongs to the methyltransferase superfamily. RNA methyltransferase RsmG family.</text>
</comment>
<evidence type="ECO:0000255" key="1">
    <source>
        <dbReference type="HAMAP-Rule" id="MF_00074"/>
    </source>
</evidence>
<keyword id="KW-0963">Cytoplasm</keyword>
<keyword id="KW-0489">Methyltransferase</keyword>
<keyword id="KW-1185">Reference proteome</keyword>
<keyword id="KW-0698">rRNA processing</keyword>
<keyword id="KW-0949">S-adenosyl-L-methionine</keyword>
<keyword id="KW-0808">Transferase</keyword>
<gene>
    <name evidence="1" type="primary">rsmG</name>
    <name type="ordered locus">PBPRA3614</name>
</gene>
<organism>
    <name type="scientific">Photobacterium profundum (strain SS9)</name>
    <dbReference type="NCBI Taxonomy" id="298386"/>
    <lineage>
        <taxon>Bacteria</taxon>
        <taxon>Pseudomonadati</taxon>
        <taxon>Pseudomonadota</taxon>
        <taxon>Gammaproteobacteria</taxon>
        <taxon>Vibrionales</taxon>
        <taxon>Vibrionaceae</taxon>
        <taxon>Photobacterium</taxon>
    </lineage>
</organism>
<accession>Q6LLF8</accession>
<reference key="1">
    <citation type="journal article" date="2005" name="Science">
        <title>Life at depth: Photobacterium profundum genome sequence and expression analysis.</title>
        <authorList>
            <person name="Vezzi A."/>
            <person name="Campanaro S."/>
            <person name="D'Angelo M."/>
            <person name="Simonato F."/>
            <person name="Vitulo N."/>
            <person name="Lauro F.M."/>
            <person name="Cestaro A."/>
            <person name="Malacrida G."/>
            <person name="Simionati B."/>
            <person name="Cannata N."/>
            <person name="Romualdi C."/>
            <person name="Bartlett D.H."/>
            <person name="Valle G."/>
        </authorList>
    </citation>
    <scope>NUCLEOTIDE SEQUENCE [LARGE SCALE GENOMIC DNA]</scope>
    <source>
        <strain>ATCC BAA-1253 / SS9</strain>
    </source>
</reference>
<sequence length="206" mass="23268">MKQRLVQLIAQTELQVTEQQVQQLVGYVELLHKWNKAYNLTSVRDPNEMLVKHIMDSIVVSAHLQGENFIDVGTGPGLPGIPLAIMCPEKNFTLLDSLGKRIRFIKQVVHELKIANVTPVQSRVEEFQPEQGFDGVISRAFASMNDMVSWCHHLPAENGHFLALKGQFSEQEVAELPEWCSVTEVKPLQIPELEGKRHLVILTAKK</sequence>
<name>RSMG_PHOPR</name>
<feature type="chain" id="PRO_0000184299" description="Ribosomal RNA small subunit methyltransferase G">
    <location>
        <begin position="1"/>
        <end position="206"/>
    </location>
</feature>
<feature type="binding site" evidence="1">
    <location>
        <position position="73"/>
    </location>
    <ligand>
        <name>S-adenosyl-L-methionine</name>
        <dbReference type="ChEBI" id="CHEBI:59789"/>
    </ligand>
</feature>
<feature type="binding site" evidence="1">
    <location>
        <position position="78"/>
    </location>
    <ligand>
        <name>S-adenosyl-L-methionine</name>
        <dbReference type="ChEBI" id="CHEBI:59789"/>
    </ligand>
</feature>
<feature type="binding site" evidence="1">
    <location>
        <begin position="124"/>
        <end position="125"/>
    </location>
    <ligand>
        <name>S-adenosyl-L-methionine</name>
        <dbReference type="ChEBI" id="CHEBI:59789"/>
    </ligand>
</feature>
<feature type="binding site" evidence="1">
    <location>
        <position position="139"/>
    </location>
    <ligand>
        <name>S-adenosyl-L-methionine</name>
        <dbReference type="ChEBI" id="CHEBI:59789"/>
    </ligand>
</feature>
<dbReference type="EC" id="2.1.1.170" evidence="1"/>
<dbReference type="EMBL" id="CR378674">
    <property type="protein sequence ID" value="CAG21870.1"/>
    <property type="molecule type" value="Genomic_DNA"/>
</dbReference>
<dbReference type="RefSeq" id="WP_011220106.1">
    <property type="nucleotide sequence ID" value="NC_006370.1"/>
</dbReference>
<dbReference type="SMR" id="Q6LLF8"/>
<dbReference type="STRING" id="298386.PBPRA3614"/>
<dbReference type="KEGG" id="ppr:PBPRA3614"/>
<dbReference type="eggNOG" id="COG0357">
    <property type="taxonomic scope" value="Bacteria"/>
</dbReference>
<dbReference type="HOGENOM" id="CLU_065341_2_0_6"/>
<dbReference type="Proteomes" id="UP000000593">
    <property type="component" value="Chromosome 1"/>
</dbReference>
<dbReference type="GO" id="GO:0005829">
    <property type="term" value="C:cytosol"/>
    <property type="evidence" value="ECO:0007669"/>
    <property type="project" value="TreeGrafter"/>
</dbReference>
<dbReference type="GO" id="GO:0070043">
    <property type="term" value="F:rRNA (guanine-N7-)-methyltransferase activity"/>
    <property type="evidence" value="ECO:0007669"/>
    <property type="project" value="UniProtKB-UniRule"/>
</dbReference>
<dbReference type="CDD" id="cd02440">
    <property type="entry name" value="AdoMet_MTases"/>
    <property type="match status" value="1"/>
</dbReference>
<dbReference type="FunFam" id="3.40.50.150:FF:000032">
    <property type="entry name" value="Ribosomal RNA small subunit methyltransferase G"/>
    <property type="match status" value="1"/>
</dbReference>
<dbReference type="Gene3D" id="3.40.50.150">
    <property type="entry name" value="Vaccinia Virus protein VP39"/>
    <property type="match status" value="1"/>
</dbReference>
<dbReference type="HAMAP" id="MF_00074">
    <property type="entry name" value="16SrRNA_methyltr_G"/>
    <property type="match status" value="1"/>
</dbReference>
<dbReference type="InterPro" id="IPR003682">
    <property type="entry name" value="rRNA_ssu_MeTfrase_G"/>
</dbReference>
<dbReference type="InterPro" id="IPR029063">
    <property type="entry name" value="SAM-dependent_MTases_sf"/>
</dbReference>
<dbReference type="NCBIfam" id="TIGR00138">
    <property type="entry name" value="rsmG_gidB"/>
    <property type="match status" value="1"/>
</dbReference>
<dbReference type="PANTHER" id="PTHR31760">
    <property type="entry name" value="S-ADENOSYL-L-METHIONINE-DEPENDENT METHYLTRANSFERASES SUPERFAMILY PROTEIN"/>
    <property type="match status" value="1"/>
</dbReference>
<dbReference type="PANTHER" id="PTHR31760:SF0">
    <property type="entry name" value="S-ADENOSYL-L-METHIONINE-DEPENDENT METHYLTRANSFERASES SUPERFAMILY PROTEIN"/>
    <property type="match status" value="1"/>
</dbReference>
<dbReference type="Pfam" id="PF02527">
    <property type="entry name" value="GidB"/>
    <property type="match status" value="1"/>
</dbReference>
<dbReference type="PIRSF" id="PIRSF003078">
    <property type="entry name" value="GidB"/>
    <property type="match status" value="1"/>
</dbReference>
<dbReference type="SUPFAM" id="SSF53335">
    <property type="entry name" value="S-adenosyl-L-methionine-dependent methyltransferases"/>
    <property type="match status" value="1"/>
</dbReference>